<evidence type="ECO:0000255" key="1">
    <source>
        <dbReference type="HAMAP-Rule" id="MF_01570"/>
    </source>
</evidence>
<organism>
    <name type="scientific">Methylorubrum extorquens (strain PA1)</name>
    <name type="common">Methylobacterium extorquens</name>
    <dbReference type="NCBI Taxonomy" id="419610"/>
    <lineage>
        <taxon>Bacteria</taxon>
        <taxon>Pseudomonadati</taxon>
        <taxon>Pseudomonadota</taxon>
        <taxon>Alphaproteobacteria</taxon>
        <taxon>Hyphomicrobiales</taxon>
        <taxon>Methylobacteriaceae</taxon>
        <taxon>Methylorubrum</taxon>
    </lineage>
</organism>
<feature type="chain" id="PRO_1000199450" description="Proline--tRNA ligase">
    <location>
        <begin position="1"/>
        <end position="441"/>
    </location>
</feature>
<gene>
    <name evidence="1" type="primary">proS</name>
    <name type="ordered locus">Mext_1066</name>
</gene>
<dbReference type="EC" id="6.1.1.15" evidence="1"/>
<dbReference type="EMBL" id="CP000908">
    <property type="protein sequence ID" value="ABY29471.1"/>
    <property type="molecule type" value="Genomic_DNA"/>
</dbReference>
<dbReference type="RefSeq" id="WP_003598172.1">
    <property type="nucleotide sequence ID" value="NC_010172.1"/>
</dbReference>
<dbReference type="SMR" id="A9W1L5"/>
<dbReference type="KEGG" id="mex:Mext_1066"/>
<dbReference type="eggNOG" id="COG0442">
    <property type="taxonomic scope" value="Bacteria"/>
</dbReference>
<dbReference type="HOGENOM" id="CLU_016739_4_2_5"/>
<dbReference type="BioCyc" id="MEXT419610:MEXT_RS05355-MONOMER"/>
<dbReference type="GO" id="GO:0005829">
    <property type="term" value="C:cytosol"/>
    <property type="evidence" value="ECO:0007669"/>
    <property type="project" value="TreeGrafter"/>
</dbReference>
<dbReference type="GO" id="GO:0005524">
    <property type="term" value="F:ATP binding"/>
    <property type="evidence" value="ECO:0007669"/>
    <property type="project" value="UniProtKB-UniRule"/>
</dbReference>
<dbReference type="GO" id="GO:0004827">
    <property type="term" value="F:proline-tRNA ligase activity"/>
    <property type="evidence" value="ECO:0007669"/>
    <property type="project" value="UniProtKB-UniRule"/>
</dbReference>
<dbReference type="GO" id="GO:0006433">
    <property type="term" value="P:prolyl-tRNA aminoacylation"/>
    <property type="evidence" value="ECO:0007669"/>
    <property type="project" value="UniProtKB-UniRule"/>
</dbReference>
<dbReference type="CDD" id="cd00861">
    <property type="entry name" value="ProRS_anticodon_short"/>
    <property type="match status" value="1"/>
</dbReference>
<dbReference type="CDD" id="cd00779">
    <property type="entry name" value="ProRS_core_prok"/>
    <property type="match status" value="1"/>
</dbReference>
<dbReference type="FunFam" id="3.30.930.10:FF:000042">
    <property type="entry name" value="probable proline--tRNA ligase, mitochondrial"/>
    <property type="match status" value="1"/>
</dbReference>
<dbReference type="FunFam" id="3.40.50.800:FF:000032">
    <property type="entry name" value="Proline--tRNA ligase"/>
    <property type="match status" value="1"/>
</dbReference>
<dbReference type="Gene3D" id="3.40.50.800">
    <property type="entry name" value="Anticodon-binding domain"/>
    <property type="match status" value="1"/>
</dbReference>
<dbReference type="Gene3D" id="3.30.930.10">
    <property type="entry name" value="Bira Bifunctional Protein, Domain 2"/>
    <property type="match status" value="1"/>
</dbReference>
<dbReference type="HAMAP" id="MF_01570">
    <property type="entry name" value="Pro_tRNA_synth_type2"/>
    <property type="match status" value="1"/>
</dbReference>
<dbReference type="InterPro" id="IPR002314">
    <property type="entry name" value="aa-tRNA-synt_IIb"/>
</dbReference>
<dbReference type="InterPro" id="IPR006195">
    <property type="entry name" value="aa-tRNA-synth_II"/>
</dbReference>
<dbReference type="InterPro" id="IPR045864">
    <property type="entry name" value="aa-tRNA-synth_II/BPL/LPL"/>
</dbReference>
<dbReference type="InterPro" id="IPR004154">
    <property type="entry name" value="Anticodon-bd"/>
</dbReference>
<dbReference type="InterPro" id="IPR036621">
    <property type="entry name" value="Anticodon-bd_dom_sf"/>
</dbReference>
<dbReference type="InterPro" id="IPR002316">
    <property type="entry name" value="Pro-tRNA-ligase_IIa"/>
</dbReference>
<dbReference type="InterPro" id="IPR004500">
    <property type="entry name" value="Pro-tRNA-synth_IIa_bac-type"/>
</dbReference>
<dbReference type="InterPro" id="IPR050062">
    <property type="entry name" value="Pro-tRNA_synthetase"/>
</dbReference>
<dbReference type="InterPro" id="IPR023716">
    <property type="entry name" value="Prolyl-tRNA_ligase_IIa_type2"/>
</dbReference>
<dbReference type="InterPro" id="IPR044140">
    <property type="entry name" value="ProRS_anticodon_short"/>
</dbReference>
<dbReference type="InterPro" id="IPR033730">
    <property type="entry name" value="ProRS_core_prok"/>
</dbReference>
<dbReference type="NCBIfam" id="NF008979">
    <property type="entry name" value="PRK12325.1"/>
    <property type="match status" value="1"/>
</dbReference>
<dbReference type="NCBIfam" id="TIGR00409">
    <property type="entry name" value="proS_fam_II"/>
    <property type="match status" value="1"/>
</dbReference>
<dbReference type="PANTHER" id="PTHR42753">
    <property type="entry name" value="MITOCHONDRIAL RIBOSOME PROTEIN L39/PROLYL-TRNA LIGASE FAMILY MEMBER"/>
    <property type="match status" value="1"/>
</dbReference>
<dbReference type="PANTHER" id="PTHR42753:SF2">
    <property type="entry name" value="PROLINE--TRNA LIGASE"/>
    <property type="match status" value="1"/>
</dbReference>
<dbReference type="Pfam" id="PF03129">
    <property type="entry name" value="HGTP_anticodon"/>
    <property type="match status" value="1"/>
</dbReference>
<dbReference type="Pfam" id="PF00587">
    <property type="entry name" value="tRNA-synt_2b"/>
    <property type="match status" value="1"/>
</dbReference>
<dbReference type="PRINTS" id="PR01046">
    <property type="entry name" value="TRNASYNTHPRO"/>
</dbReference>
<dbReference type="SUPFAM" id="SSF52954">
    <property type="entry name" value="Class II aaRS ABD-related"/>
    <property type="match status" value="1"/>
</dbReference>
<dbReference type="SUPFAM" id="SSF55681">
    <property type="entry name" value="Class II aaRS and biotin synthetases"/>
    <property type="match status" value="1"/>
</dbReference>
<dbReference type="PROSITE" id="PS50862">
    <property type="entry name" value="AA_TRNA_LIGASE_II"/>
    <property type="match status" value="1"/>
</dbReference>
<name>SYP_METEP</name>
<reference key="1">
    <citation type="submission" date="2007-12" db="EMBL/GenBank/DDBJ databases">
        <title>Complete sequence of Methylobacterium extorquens PA1.</title>
        <authorList>
            <consortium name="US DOE Joint Genome Institute"/>
            <person name="Copeland A."/>
            <person name="Lucas S."/>
            <person name="Lapidus A."/>
            <person name="Barry K."/>
            <person name="Glavina del Rio T."/>
            <person name="Dalin E."/>
            <person name="Tice H."/>
            <person name="Pitluck S."/>
            <person name="Saunders E."/>
            <person name="Brettin T."/>
            <person name="Bruce D."/>
            <person name="Detter J.C."/>
            <person name="Han C."/>
            <person name="Schmutz J."/>
            <person name="Larimer F."/>
            <person name="Land M."/>
            <person name="Hauser L."/>
            <person name="Kyrpides N."/>
            <person name="Kim E."/>
            <person name="Marx C."/>
            <person name="Richardson P."/>
        </authorList>
    </citation>
    <scope>NUCLEOTIDE SEQUENCE [LARGE SCALE GENOMIC DNA]</scope>
    <source>
        <strain>PA1</strain>
    </source>
</reference>
<proteinExistence type="inferred from homology"/>
<comment type="function">
    <text evidence="1">Catalyzes the attachment of proline to tRNA(Pro) in a two-step reaction: proline is first activated by ATP to form Pro-AMP and then transferred to the acceptor end of tRNA(Pro).</text>
</comment>
<comment type="catalytic activity">
    <reaction evidence="1">
        <text>tRNA(Pro) + L-proline + ATP = L-prolyl-tRNA(Pro) + AMP + diphosphate</text>
        <dbReference type="Rhea" id="RHEA:14305"/>
        <dbReference type="Rhea" id="RHEA-COMP:9700"/>
        <dbReference type="Rhea" id="RHEA-COMP:9702"/>
        <dbReference type="ChEBI" id="CHEBI:30616"/>
        <dbReference type="ChEBI" id="CHEBI:33019"/>
        <dbReference type="ChEBI" id="CHEBI:60039"/>
        <dbReference type="ChEBI" id="CHEBI:78442"/>
        <dbReference type="ChEBI" id="CHEBI:78532"/>
        <dbReference type="ChEBI" id="CHEBI:456215"/>
        <dbReference type="EC" id="6.1.1.15"/>
    </reaction>
</comment>
<comment type="subunit">
    <text evidence="1">Homodimer.</text>
</comment>
<comment type="subcellular location">
    <subcellularLocation>
        <location evidence="1">Cytoplasm</location>
    </subcellularLocation>
</comment>
<comment type="similarity">
    <text evidence="1">Belongs to the class-II aminoacyl-tRNA synthetase family. ProS type 2 subfamily.</text>
</comment>
<keyword id="KW-0030">Aminoacyl-tRNA synthetase</keyword>
<keyword id="KW-0067">ATP-binding</keyword>
<keyword id="KW-0963">Cytoplasm</keyword>
<keyword id="KW-0436">Ligase</keyword>
<keyword id="KW-0547">Nucleotide-binding</keyword>
<keyword id="KW-0648">Protein biosynthesis</keyword>
<protein>
    <recommendedName>
        <fullName evidence="1">Proline--tRNA ligase</fullName>
        <ecNumber evidence="1">6.1.1.15</ecNumber>
    </recommendedName>
    <alternativeName>
        <fullName evidence="1">Prolyl-tRNA synthetase</fullName>
        <shortName evidence="1">ProRS</shortName>
    </alternativeName>
</protein>
<accession>A9W1L5</accession>
<sequence>MRLSRYFLPILRETPKEAEIVSHRLMLRAGMIRQEAAGIYAWLPLGLRVLNKVCDVVRAEQDRAGAIEILMPTIQAADLWRESGRYEAYGKEMLRLKDRHERELLYGPTAEEVVTEIFRASTRSYKDLPKNLYQISWKFRDEVRPRFGTMRSREFLMKDGYSFDIDQAAARHSYNKVFVSYLRTFERLGLRAIPMRADTGPIGGDLSHEFIILAKTGESEVFCDQAYLDMPVPPPSVDFDDVAGLQGVVDAWTSHYAATDEMHDEAVFAEVPEASRLSARGIEVGHIFYFGTKYSTPMKAVVTGPDGSERPVHMGSYGIGPSRLVAATIEASHDEAGIIWPDAIAPFDVALINLKVGDGACDTACAEIQAALETAGLSVLYDDRDERPGAKFATADLIGLPWQVIVGPKGLAEGKIELKRRASGERETLDPVDLPARIRRL</sequence>